<comment type="function">
    <text evidence="1">Component of the acetyl coenzyme A carboxylase (ACC) complex. First, biotin carboxylase catalyzes the carboxylation of biotin on its carrier protein (BCCP) and then the CO(2) group is transferred by the carboxyltransferase to acetyl-CoA to form malonyl-CoA.</text>
</comment>
<comment type="catalytic activity">
    <reaction evidence="1">
        <text>N(6)-carboxybiotinyl-L-lysyl-[protein] + acetyl-CoA = N(6)-biotinyl-L-lysyl-[protein] + malonyl-CoA</text>
        <dbReference type="Rhea" id="RHEA:54728"/>
        <dbReference type="Rhea" id="RHEA-COMP:10505"/>
        <dbReference type="Rhea" id="RHEA-COMP:10506"/>
        <dbReference type="ChEBI" id="CHEBI:57288"/>
        <dbReference type="ChEBI" id="CHEBI:57384"/>
        <dbReference type="ChEBI" id="CHEBI:83144"/>
        <dbReference type="ChEBI" id="CHEBI:83145"/>
        <dbReference type="EC" id="2.1.3.15"/>
    </reaction>
</comment>
<comment type="pathway">
    <text evidence="1">Lipid metabolism; malonyl-CoA biosynthesis; malonyl-CoA from acetyl-CoA: step 1/1.</text>
</comment>
<comment type="subunit">
    <text evidence="1">Acetyl-CoA carboxylase is a heterohexamer composed of biotin carboxyl carrier protein (AccB), biotin carboxylase (AccC) and two subunits each of ACCase subunit alpha (AccA) and ACCase subunit beta (AccD).</text>
</comment>
<comment type="subcellular location">
    <subcellularLocation>
        <location evidence="1">Cytoplasm</location>
    </subcellularLocation>
</comment>
<comment type="similarity">
    <text evidence="1">Belongs to the AccA family.</text>
</comment>
<accession>B3H2H3</accession>
<proteinExistence type="inferred from homology"/>
<keyword id="KW-0067">ATP-binding</keyword>
<keyword id="KW-0963">Cytoplasm</keyword>
<keyword id="KW-0275">Fatty acid biosynthesis</keyword>
<keyword id="KW-0276">Fatty acid metabolism</keyword>
<keyword id="KW-0444">Lipid biosynthesis</keyword>
<keyword id="KW-0443">Lipid metabolism</keyword>
<keyword id="KW-0547">Nucleotide-binding</keyword>
<keyword id="KW-0808">Transferase</keyword>
<reference key="1">
    <citation type="submission" date="2008-06" db="EMBL/GenBank/DDBJ databases">
        <title>Genome and proteome analysis of A. pleuropneumoniae serotype 7.</title>
        <authorList>
            <person name="Linke B."/>
            <person name="Buettner F."/>
            <person name="Martinez-Arias R."/>
            <person name="Goesmann A."/>
            <person name="Baltes N."/>
            <person name="Tegetmeyer H."/>
            <person name="Singh M."/>
            <person name="Gerlach G.F."/>
        </authorList>
    </citation>
    <scope>NUCLEOTIDE SEQUENCE [LARGE SCALE GENOMIC DNA]</scope>
    <source>
        <strain>AP76</strain>
    </source>
</reference>
<gene>
    <name evidence="1" type="primary">accA</name>
    <name type="ordered locus">APP7_1546</name>
</gene>
<organism>
    <name type="scientific">Actinobacillus pleuropneumoniae serotype 7 (strain AP76)</name>
    <dbReference type="NCBI Taxonomy" id="537457"/>
    <lineage>
        <taxon>Bacteria</taxon>
        <taxon>Pseudomonadati</taxon>
        <taxon>Pseudomonadota</taxon>
        <taxon>Gammaproteobacteria</taxon>
        <taxon>Pasteurellales</taxon>
        <taxon>Pasteurellaceae</taxon>
        <taxon>Actinobacillus</taxon>
    </lineage>
</organism>
<protein>
    <recommendedName>
        <fullName evidence="1">Acetyl-coenzyme A carboxylase carboxyl transferase subunit alpha</fullName>
        <shortName evidence="1">ACCase subunit alpha</shortName>
        <shortName evidence="1">Acetyl-CoA carboxylase carboxyltransferase subunit alpha</shortName>
        <ecNumber evidence="1">2.1.3.15</ecNumber>
    </recommendedName>
</protein>
<sequence>MSQEYLDFELPIAELEAKIESLRAVSEQDGKIDLDDEIKRLQKKSEELTKKTFANLDAWQVSRMARHPNRPYTLDYIEHIFTEFDELAGDRAFADDKAIVGGIARLDGRPVMVIGHQKGRTTKEKVRRNFGMPAPEGYRKALRLMEMADRFNMPIITFIDTPGAYPGIGAEERGQAEAIARNLREMAQLKVPVICTVIGEGGSGGALAIGVGDKVNMLQYSTYSVISPEGCASILWKSAEKASTAAEVMGLTAQRLKELNLIDSIVAEPLGGAHRDVAQMAENLKQQILADLQDLAPLSTEDLLDRRYQRLMSYGYV</sequence>
<evidence type="ECO:0000255" key="1">
    <source>
        <dbReference type="HAMAP-Rule" id="MF_00823"/>
    </source>
</evidence>
<evidence type="ECO:0000255" key="2">
    <source>
        <dbReference type="PROSITE-ProRule" id="PRU01137"/>
    </source>
</evidence>
<feature type="chain" id="PRO_1000134452" description="Acetyl-coenzyme A carboxylase carboxyl transferase subunit alpha">
    <location>
        <begin position="1"/>
        <end position="317"/>
    </location>
</feature>
<feature type="domain" description="CoA carboxyltransferase C-terminal" evidence="2">
    <location>
        <begin position="40"/>
        <end position="294"/>
    </location>
</feature>
<name>ACCA_ACTP7</name>
<dbReference type="EC" id="2.1.3.15" evidence="1"/>
<dbReference type="EMBL" id="CP001091">
    <property type="protein sequence ID" value="ACE62198.1"/>
    <property type="molecule type" value="Genomic_DNA"/>
</dbReference>
<dbReference type="RefSeq" id="WP_005598724.1">
    <property type="nucleotide sequence ID" value="NC_010939.1"/>
</dbReference>
<dbReference type="SMR" id="B3H2H3"/>
<dbReference type="GeneID" id="48599753"/>
<dbReference type="KEGG" id="apa:APP7_1546"/>
<dbReference type="HOGENOM" id="CLU_015486_0_2_6"/>
<dbReference type="UniPathway" id="UPA00655">
    <property type="reaction ID" value="UER00711"/>
</dbReference>
<dbReference type="Proteomes" id="UP000001226">
    <property type="component" value="Chromosome"/>
</dbReference>
<dbReference type="GO" id="GO:0009317">
    <property type="term" value="C:acetyl-CoA carboxylase complex"/>
    <property type="evidence" value="ECO:0007669"/>
    <property type="project" value="InterPro"/>
</dbReference>
<dbReference type="GO" id="GO:0003989">
    <property type="term" value="F:acetyl-CoA carboxylase activity"/>
    <property type="evidence" value="ECO:0007669"/>
    <property type="project" value="InterPro"/>
</dbReference>
<dbReference type="GO" id="GO:0005524">
    <property type="term" value="F:ATP binding"/>
    <property type="evidence" value="ECO:0007669"/>
    <property type="project" value="UniProtKB-KW"/>
</dbReference>
<dbReference type="GO" id="GO:0016743">
    <property type="term" value="F:carboxyl- or carbamoyltransferase activity"/>
    <property type="evidence" value="ECO:0007669"/>
    <property type="project" value="UniProtKB-UniRule"/>
</dbReference>
<dbReference type="GO" id="GO:0006633">
    <property type="term" value="P:fatty acid biosynthetic process"/>
    <property type="evidence" value="ECO:0007669"/>
    <property type="project" value="UniProtKB-KW"/>
</dbReference>
<dbReference type="GO" id="GO:2001295">
    <property type="term" value="P:malonyl-CoA biosynthetic process"/>
    <property type="evidence" value="ECO:0007669"/>
    <property type="project" value="UniProtKB-UniRule"/>
</dbReference>
<dbReference type="FunFam" id="3.90.226.10:FF:000008">
    <property type="entry name" value="Acetyl-coenzyme A carboxylase carboxyl transferase subunit alpha"/>
    <property type="match status" value="1"/>
</dbReference>
<dbReference type="Gene3D" id="3.90.226.10">
    <property type="entry name" value="2-enoyl-CoA Hydratase, Chain A, domain 1"/>
    <property type="match status" value="1"/>
</dbReference>
<dbReference type="HAMAP" id="MF_00823">
    <property type="entry name" value="AcetylCoA_CT_alpha"/>
    <property type="match status" value="1"/>
</dbReference>
<dbReference type="InterPro" id="IPR001095">
    <property type="entry name" value="Acetyl_CoA_COase_a_su"/>
</dbReference>
<dbReference type="InterPro" id="IPR029045">
    <property type="entry name" value="ClpP/crotonase-like_dom_sf"/>
</dbReference>
<dbReference type="InterPro" id="IPR011763">
    <property type="entry name" value="COA_CT_C"/>
</dbReference>
<dbReference type="NCBIfam" id="TIGR00513">
    <property type="entry name" value="accA"/>
    <property type="match status" value="1"/>
</dbReference>
<dbReference type="NCBIfam" id="NF041504">
    <property type="entry name" value="AccA_sub"/>
    <property type="match status" value="1"/>
</dbReference>
<dbReference type="NCBIfam" id="NF004344">
    <property type="entry name" value="PRK05724.1"/>
    <property type="match status" value="1"/>
</dbReference>
<dbReference type="PANTHER" id="PTHR42853">
    <property type="entry name" value="ACETYL-COENZYME A CARBOXYLASE CARBOXYL TRANSFERASE SUBUNIT ALPHA"/>
    <property type="match status" value="1"/>
</dbReference>
<dbReference type="PANTHER" id="PTHR42853:SF3">
    <property type="entry name" value="ACETYL-COENZYME A CARBOXYLASE CARBOXYL TRANSFERASE SUBUNIT ALPHA, CHLOROPLASTIC"/>
    <property type="match status" value="1"/>
</dbReference>
<dbReference type="Pfam" id="PF03255">
    <property type="entry name" value="ACCA"/>
    <property type="match status" value="1"/>
</dbReference>
<dbReference type="PRINTS" id="PR01069">
    <property type="entry name" value="ACCCTRFRASEA"/>
</dbReference>
<dbReference type="SUPFAM" id="SSF52096">
    <property type="entry name" value="ClpP/crotonase"/>
    <property type="match status" value="1"/>
</dbReference>
<dbReference type="PROSITE" id="PS50989">
    <property type="entry name" value="COA_CT_CTER"/>
    <property type="match status" value="1"/>
</dbReference>